<sequence length="378" mass="42047">MIQYVYLKHMRKLWSLGKVRSTVLRFSTTNRNASHLIKNELEQISPGIRQMLNSNSEFLEECSKYYTIAQGKQMRPSLVLLMSKATSLCHGIDRSVVGDKYIDDDDLRSFSTGQILPSQLRLAQITEMIHIASLLHDDVIDHANVRRGSPSSNVAFGNRRSILAGNFILARASTAMARLRNPQVTELLATVIADLVRGEFLQLKNTMDPSSLEIKQSNFDYYIEKSFLKTASLISKSCKASTILGQCSPTVATAAGEYGRCIGTAFQLMDDVLDYTSKDDTLGKAAGADLKLGLATAPVLFAWKKYPELGAMIVNRFNHPSDIQRARSLVECTDAIEQTITWAKEYIKKAKDSLLCLPDSPARKALFALADKVITRKK</sequence>
<reference key="1">
    <citation type="journal article" date="1997" name="J. Biochem.">
        <title>Analysis of the decaprenyl diphosphate synthase (dps) gene in fission yeast suggests a role of ubiquinone as an antioxidant.</title>
        <authorList>
            <person name="Suzuki K."/>
            <person name="Okada K."/>
            <person name="Kamiya Y."/>
            <person name="Zhu X.F."/>
            <person name="Nakagawa T."/>
            <person name="Kawamukai M."/>
            <person name="Matsuda H."/>
        </authorList>
    </citation>
    <scope>NUCLEOTIDE SEQUENCE [MRNA]</scope>
</reference>
<reference key="2">
    <citation type="journal article" date="1997" name="DNA Res.">
        <title>Identification of open reading frames in Schizosaccharomyces pombe cDNAs.</title>
        <authorList>
            <person name="Yoshioka S."/>
            <person name="Kato K."/>
            <person name="Nakai K."/>
            <person name="Okayama H."/>
            <person name="Nojima H."/>
        </authorList>
    </citation>
    <scope>NUCLEOTIDE SEQUENCE [LARGE SCALE MRNA]</scope>
    <source>
        <strain>PR745</strain>
    </source>
</reference>
<reference key="3">
    <citation type="journal article" date="2002" name="Nature">
        <title>The genome sequence of Schizosaccharomyces pombe.</title>
        <authorList>
            <person name="Wood V."/>
            <person name="Gwilliam R."/>
            <person name="Rajandream M.A."/>
            <person name="Lyne M.H."/>
            <person name="Lyne R."/>
            <person name="Stewart A."/>
            <person name="Sgouros J.G."/>
            <person name="Peat N."/>
            <person name="Hayles J."/>
            <person name="Baker S.G."/>
            <person name="Basham D."/>
            <person name="Bowman S."/>
            <person name="Brooks K."/>
            <person name="Brown D."/>
            <person name="Brown S."/>
            <person name="Chillingworth T."/>
            <person name="Churcher C.M."/>
            <person name="Collins M."/>
            <person name="Connor R."/>
            <person name="Cronin A."/>
            <person name="Davis P."/>
            <person name="Feltwell T."/>
            <person name="Fraser A."/>
            <person name="Gentles S."/>
            <person name="Goble A."/>
            <person name="Hamlin N."/>
            <person name="Harris D.E."/>
            <person name="Hidalgo J."/>
            <person name="Hodgson G."/>
            <person name="Holroyd S."/>
            <person name="Hornsby T."/>
            <person name="Howarth S."/>
            <person name="Huckle E.J."/>
            <person name="Hunt S."/>
            <person name="Jagels K."/>
            <person name="James K.D."/>
            <person name="Jones L."/>
            <person name="Jones M."/>
            <person name="Leather S."/>
            <person name="McDonald S."/>
            <person name="McLean J."/>
            <person name="Mooney P."/>
            <person name="Moule S."/>
            <person name="Mungall K.L."/>
            <person name="Murphy L.D."/>
            <person name="Niblett D."/>
            <person name="Odell C."/>
            <person name="Oliver K."/>
            <person name="O'Neil S."/>
            <person name="Pearson D."/>
            <person name="Quail M.A."/>
            <person name="Rabbinowitsch E."/>
            <person name="Rutherford K.M."/>
            <person name="Rutter S."/>
            <person name="Saunders D."/>
            <person name="Seeger K."/>
            <person name="Sharp S."/>
            <person name="Skelton J."/>
            <person name="Simmonds M.N."/>
            <person name="Squares R."/>
            <person name="Squares S."/>
            <person name="Stevens K."/>
            <person name="Taylor K."/>
            <person name="Taylor R.G."/>
            <person name="Tivey A."/>
            <person name="Walsh S.V."/>
            <person name="Warren T."/>
            <person name="Whitehead S."/>
            <person name="Woodward J.R."/>
            <person name="Volckaert G."/>
            <person name="Aert R."/>
            <person name="Robben J."/>
            <person name="Grymonprez B."/>
            <person name="Weltjens I."/>
            <person name="Vanstreels E."/>
            <person name="Rieger M."/>
            <person name="Schaefer M."/>
            <person name="Mueller-Auer S."/>
            <person name="Gabel C."/>
            <person name="Fuchs M."/>
            <person name="Duesterhoeft A."/>
            <person name="Fritzc C."/>
            <person name="Holzer E."/>
            <person name="Moestl D."/>
            <person name="Hilbert H."/>
            <person name="Borzym K."/>
            <person name="Langer I."/>
            <person name="Beck A."/>
            <person name="Lehrach H."/>
            <person name="Reinhardt R."/>
            <person name="Pohl T.M."/>
            <person name="Eger P."/>
            <person name="Zimmermann W."/>
            <person name="Wedler H."/>
            <person name="Wambutt R."/>
            <person name="Purnelle B."/>
            <person name="Goffeau A."/>
            <person name="Cadieu E."/>
            <person name="Dreano S."/>
            <person name="Gloux S."/>
            <person name="Lelaure V."/>
            <person name="Mottier S."/>
            <person name="Galibert F."/>
            <person name="Aves S.J."/>
            <person name="Xiang Z."/>
            <person name="Hunt C."/>
            <person name="Moore K."/>
            <person name="Hurst S.M."/>
            <person name="Lucas M."/>
            <person name="Rochet M."/>
            <person name="Gaillardin C."/>
            <person name="Tallada V.A."/>
            <person name="Garzon A."/>
            <person name="Thode G."/>
            <person name="Daga R.R."/>
            <person name="Cruzado L."/>
            <person name="Jimenez J."/>
            <person name="Sanchez M."/>
            <person name="del Rey F."/>
            <person name="Benito J."/>
            <person name="Dominguez A."/>
            <person name="Revuelta J.L."/>
            <person name="Moreno S."/>
            <person name="Armstrong J."/>
            <person name="Forsburg S.L."/>
            <person name="Cerutti L."/>
            <person name="Lowe T."/>
            <person name="McCombie W.R."/>
            <person name="Paulsen I."/>
            <person name="Potashkin J."/>
            <person name="Shpakovski G.V."/>
            <person name="Ussery D."/>
            <person name="Barrell B.G."/>
            <person name="Nurse P."/>
        </authorList>
    </citation>
    <scope>NUCLEOTIDE SEQUENCE [LARGE SCALE GENOMIC DNA]</scope>
    <source>
        <strain>972 / ATCC 24843</strain>
    </source>
</reference>
<reference key="4">
    <citation type="journal article" date="2003" name="Eur. J. Biochem.">
        <title>Fission yeast decaprenyl diphosphate synthase consists of Dps1 and the newly characterized Dlp1 protein in a novel heterotetrameric structure.</title>
        <authorList>
            <person name="Saiki R."/>
            <person name="Nagata A."/>
            <person name="Uchida N."/>
            <person name="Kainou T."/>
            <person name="Matsuda H."/>
            <person name="Kawamukai M."/>
        </authorList>
    </citation>
    <scope>SUBUNIT</scope>
</reference>
<reference key="5">
    <citation type="journal article" date="2014" name="PLoS ONE">
        <title>Functional conservation of coenzyme Q biosynthetic genes among yeasts, plants, and humans.</title>
        <authorList>
            <person name="Hayashi K."/>
            <person name="Ogiyama Y."/>
            <person name="Yokomi K."/>
            <person name="Nakagawa T."/>
            <person name="Kaino T."/>
            <person name="Kawamukai M."/>
        </authorList>
    </citation>
    <scope>SUBCELLULAR LOCATION</scope>
</reference>
<proteinExistence type="evidence at protein level"/>
<dbReference type="EC" id="2.5.1.91"/>
<dbReference type="EMBL" id="D84311">
    <property type="protein sequence ID" value="BAA12314.1"/>
    <property type="molecule type" value="mRNA"/>
</dbReference>
<dbReference type="EMBL" id="D89265">
    <property type="protein sequence ID" value="BAA13926.1"/>
    <property type="status" value="ALT_FRAME"/>
    <property type="molecule type" value="mRNA"/>
</dbReference>
<dbReference type="EMBL" id="CU329671">
    <property type="protein sequence ID" value="CAB66154.1"/>
    <property type="molecule type" value="Genomic_DNA"/>
</dbReference>
<dbReference type="PIR" id="JC5429">
    <property type="entry name" value="JC5429"/>
</dbReference>
<dbReference type="PIR" id="T43193">
    <property type="entry name" value="T43193"/>
</dbReference>
<dbReference type="RefSeq" id="NP_595276.1">
    <property type="nucleotide sequence ID" value="NM_001021183.2"/>
</dbReference>
<dbReference type="SMR" id="O43091"/>
<dbReference type="BioGRID" id="277911">
    <property type="interactions" value="5"/>
</dbReference>
<dbReference type="FunCoup" id="O43091">
    <property type="interactions" value="68"/>
</dbReference>
<dbReference type="IntAct" id="O43091">
    <property type="interactions" value="1"/>
</dbReference>
<dbReference type="MINT" id="O43091"/>
<dbReference type="STRING" id="284812.O43091"/>
<dbReference type="PaxDb" id="4896-SPBPJ4664.01.1"/>
<dbReference type="EnsemblFungi" id="SPBPJ4664.01.1">
    <property type="protein sequence ID" value="SPBPJ4664.01.1:pep"/>
    <property type="gene ID" value="SPBPJ4664.01"/>
</dbReference>
<dbReference type="GeneID" id="2541402"/>
<dbReference type="KEGG" id="spo:2541402"/>
<dbReference type="PomBase" id="SPBPJ4664.01">
    <property type="gene designation" value="dps1"/>
</dbReference>
<dbReference type="VEuPathDB" id="FungiDB:SPBPJ4664.01"/>
<dbReference type="eggNOG" id="KOG0776">
    <property type="taxonomic scope" value="Eukaryota"/>
</dbReference>
<dbReference type="HOGENOM" id="CLU_014015_1_0_1"/>
<dbReference type="InParanoid" id="O43091"/>
<dbReference type="OMA" id="GKQMRPM"/>
<dbReference type="PhylomeDB" id="O43091"/>
<dbReference type="BRENDA" id="2.5.1.91">
    <property type="organism ID" value="5613"/>
</dbReference>
<dbReference type="Reactome" id="R-SPO-2142789">
    <property type="pathway name" value="Ubiquinol biosynthesis"/>
</dbReference>
<dbReference type="UniPathway" id="UPA00232"/>
<dbReference type="PRO" id="PR:O43091"/>
<dbReference type="Proteomes" id="UP000002485">
    <property type="component" value="Chromosome II"/>
</dbReference>
<dbReference type="GO" id="GO:0032478">
    <property type="term" value="C:heterotetrameric polyprenyl diphosphate synthase complex"/>
    <property type="evidence" value="ECO:0000353"/>
    <property type="project" value="PomBase"/>
</dbReference>
<dbReference type="GO" id="GO:0005739">
    <property type="term" value="C:mitochondrion"/>
    <property type="evidence" value="ECO:0000314"/>
    <property type="project" value="PomBase"/>
</dbReference>
<dbReference type="GO" id="GO:0032476">
    <property type="term" value="C:polyprenyl diphosphate synthase complex"/>
    <property type="evidence" value="ECO:0000318"/>
    <property type="project" value="GO_Central"/>
</dbReference>
<dbReference type="GO" id="GO:0097269">
    <property type="term" value="F:all-trans-decaprenyl-diphosphate synthase activity"/>
    <property type="evidence" value="ECO:0000315"/>
    <property type="project" value="PomBase"/>
</dbReference>
<dbReference type="GO" id="GO:0046872">
    <property type="term" value="F:metal ion binding"/>
    <property type="evidence" value="ECO:0007669"/>
    <property type="project" value="UniProtKB-KW"/>
</dbReference>
<dbReference type="GO" id="GO:0004659">
    <property type="term" value="F:prenyltransferase activity"/>
    <property type="evidence" value="ECO:0000318"/>
    <property type="project" value="GO_Central"/>
</dbReference>
<dbReference type="GO" id="GO:0010142">
    <property type="term" value="P:farnesyl diphosphate biosynthetic process, mevalonate pathway"/>
    <property type="evidence" value="ECO:0000315"/>
    <property type="project" value="PomBase"/>
</dbReference>
<dbReference type="GO" id="GO:0008299">
    <property type="term" value="P:isoprenoid biosynthetic process"/>
    <property type="evidence" value="ECO:0000314"/>
    <property type="project" value="PomBase"/>
</dbReference>
<dbReference type="GO" id="GO:0006744">
    <property type="term" value="P:ubiquinone biosynthetic process"/>
    <property type="evidence" value="ECO:0000315"/>
    <property type="project" value="PomBase"/>
</dbReference>
<dbReference type="CDD" id="cd00685">
    <property type="entry name" value="Trans_IPPS_HT"/>
    <property type="match status" value="1"/>
</dbReference>
<dbReference type="FunFam" id="1.10.600.10:FF:000015">
    <property type="entry name" value="Solanesyl diphosphate synthase 3, chloroplastic/mitochondrial"/>
    <property type="match status" value="1"/>
</dbReference>
<dbReference type="Gene3D" id="1.10.600.10">
    <property type="entry name" value="Farnesyl Diphosphate Synthase"/>
    <property type="match status" value="1"/>
</dbReference>
<dbReference type="InterPro" id="IPR008949">
    <property type="entry name" value="Isoprenoid_synthase_dom_sf"/>
</dbReference>
<dbReference type="InterPro" id="IPR000092">
    <property type="entry name" value="Polyprenyl_synt"/>
</dbReference>
<dbReference type="InterPro" id="IPR033749">
    <property type="entry name" value="Polyprenyl_synt_CS"/>
</dbReference>
<dbReference type="PANTHER" id="PTHR12001:SF69">
    <property type="entry name" value="ALL TRANS-POLYPRENYL-DIPHOSPHATE SYNTHASE PDSS1"/>
    <property type="match status" value="1"/>
</dbReference>
<dbReference type="PANTHER" id="PTHR12001">
    <property type="entry name" value="GERANYLGERANYL PYROPHOSPHATE SYNTHASE"/>
    <property type="match status" value="1"/>
</dbReference>
<dbReference type="Pfam" id="PF00348">
    <property type="entry name" value="polyprenyl_synt"/>
    <property type="match status" value="1"/>
</dbReference>
<dbReference type="SFLD" id="SFLDS00005">
    <property type="entry name" value="Isoprenoid_Synthase_Type_I"/>
    <property type="match status" value="1"/>
</dbReference>
<dbReference type="SUPFAM" id="SSF48576">
    <property type="entry name" value="Terpenoid synthases"/>
    <property type="match status" value="1"/>
</dbReference>
<dbReference type="PROSITE" id="PS00723">
    <property type="entry name" value="POLYPRENYL_SYNTHASE_1"/>
    <property type="match status" value="1"/>
</dbReference>
<dbReference type="PROSITE" id="PS00444">
    <property type="entry name" value="POLYPRENYL_SYNTHASE_2"/>
    <property type="match status" value="1"/>
</dbReference>
<keyword id="KW-0414">Isoprene biosynthesis</keyword>
<keyword id="KW-0460">Magnesium</keyword>
<keyword id="KW-0479">Metal-binding</keyword>
<keyword id="KW-0496">Mitochondrion</keyword>
<keyword id="KW-1185">Reference proteome</keyword>
<keyword id="KW-0808">Transferase</keyword>
<keyword id="KW-0831">Ubiquinone biosynthesis</keyword>
<comment type="function">
    <text>Supplies decaprenyl diphosphate, the precursor for the side chain of the isoprenoid quinones ubiquinone-10.</text>
</comment>
<comment type="catalytic activity">
    <reaction>
        <text>7 isopentenyl diphosphate + (2E,6E)-farnesyl diphosphate = all-trans-decaprenyl diphosphate + 7 diphosphate</text>
        <dbReference type="Rhea" id="RHEA:27802"/>
        <dbReference type="ChEBI" id="CHEBI:33019"/>
        <dbReference type="ChEBI" id="CHEBI:60721"/>
        <dbReference type="ChEBI" id="CHEBI:128769"/>
        <dbReference type="ChEBI" id="CHEBI:175763"/>
        <dbReference type="EC" id="2.5.1.91"/>
    </reaction>
</comment>
<comment type="cofactor">
    <cofactor evidence="1">
        <name>Mg(2+)</name>
        <dbReference type="ChEBI" id="CHEBI:18420"/>
    </cofactor>
    <text evidence="1">Binds 2 Mg(2+) ions per subunit.</text>
</comment>
<comment type="pathway">
    <text>Cofactor biosynthesis; ubiquinone biosynthesis.</text>
</comment>
<comment type="subunit">
    <text evidence="3">Heterotetramer of 2 dps1 and 2 dlp1 subunits.</text>
</comment>
<comment type="interaction">
    <interactant intactId="EBI-7701164">
        <id>O43091</id>
    </interactant>
    <interactant intactId="EBI-1131851">
        <id>P0AD57</id>
        <label>ispB</label>
    </interactant>
    <organismsDiffer>true</organismsDiffer>
    <experiments>2</experiments>
</comment>
<comment type="subcellular location">
    <subcellularLocation>
        <location evidence="4">Mitochondrion</location>
    </subcellularLocation>
</comment>
<comment type="similarity">
    <text evidence="5">Belongs to the FPP/GGPP synthase family.</text>
</comment>
<comment type="sequence caution" evidence="5">
    <conflict type="frameshift">
        <sequence resource="EMBL-CDS" id="BAA13926"/>
    </conflict>
</comment>
<accession>O43091</accession>
<accession>P78914</accession>
<accession>Q96WV7</accession>
<name>DPS1_SCHPO</name>
<protein>
    <recommendedName>
        <fullName>Decaprenyl-diphosphate synthase subunit 1</fullName>
        <ecNumber>2.5.1.91</ecNumber>
    </recommendedName>
    <alternativeName>
        <fullName>All-trans-decaprenyl-diphosphate synthase subunit 1</fullName>
    </alternativeName>
    <alternativeName>
        <fullName>Decaprenyl pyrophosphate synthase subunit 1</fullName>
    </alternativeName>
</protein>
<gene>
    <name type="primary">dps1</name>
    <name type="synonym">dps</name>
    <name type="ORF">SPBPJ4664.01</name>
    <name type="ORF">SPBPJ694.01</name>
</gene>
<feature type="chain" id="PRO_0000123977" description="Decaprenyl-diphosphate synthase subunit 1">
    <location>
        <begin position="1"/>
        <end position="378"/>
    </location>
</feature>
<feature type="binding site" evidence="1">
    <location>
        <position position="72"/>
    </location>
    <ligand>
        <name>isopentenyl diphosphate</name>
        <dbReference type="ChEBI" id="CHEBI:128769"/>
    </ligand>
</feature>
<feature type="binding site" evidence="1">
    <location>
        <position position="75"/>
    </location>
    <ligand>
        <name>isopentenyl diphosphate</name>
        <dbReference type="ChEBI" id="CHEBI:128769"/>
    </ligand>
</feature>
<feature type="binding site" evidence="2">
    <location>
        <position position="130"/>
    </location>
    <ligand>
        <name>isopentenyl diphosphate</name>
        <dbReference type="ChEBI" id="CHEBI:128769"/>
    </ligand>
</feature>
<feature type="binding site" evidence="1">
    <location>
        <position position="137"/>
    </location>
    <ligand>
        <name>Mg(2+)</name>
        <dbReference type="ChEBI" id="CHEBI:18420"/>
        <label>1</label>
    </ligand>
</feature>
<feature type="binding site" evidence="1">
    <location>
        <position position="137"/>
    </location>
    <ligand>
        <name>Mg(2+)</name>
        <dbReference type="ChEBI" id="CHEBI:18420"/>
        <label>2</label>
    </ligand>
</feature>
<feature type="binding site" evidence="1">
    <location>
        <position position="141"/>
    </location>
    <ligand>
        <name>Mg(2+)</name>
        <dbReference type="ChEBI" id="CHEBI:18420"/>
        <label>1</label>
    </ligand>
</feature>
<feature type="binding site" evidence="1">
    <location>
        <position position="141"/>
    </location>
    <ligand>
        <name>Mg(2+)</name>
        <dbReference type="ChEBI" id="CHEBI:18420"/>
        <label>2</label>
    </ligand>
</feature>
<feature type="binding site" evidence="1">
    <location>
        <position position="147"/>
    </location>
    <ligand>
        <name>isopentenyl diphosphate</name>
        <dbReference type="ChEBI" id="CHEBI:128769"/>
    </ligand>
</feature>
<feature type="sequence conflict" description="In Ref. 2; BAA13926." evidence="5" ref="2">
    <original>C</original>
    <variation>F</variation>
    <location>
        <position position="89"/>
    </location>
</feature>
<feature type="sequence conflict" description="In Ref. 2; BAA13926." evidence="5" ref="2">
    <original>I</original>
    <variation>T</variation>
    <location>
        <position position="102"/>
    </location>
</feature>
<feature type="sequence conflict" description="In Ref. 2; BAA13926." evidence="5" ref="2">
    <original>A</original>
    <variation>V</variation>
    <location>
        <position position="175"/>
    </location>
</feature>
<feature type="sequence conflict" description="In Ref. 2; BAA13926." evidence="5" ref="2">
    <original>T</original>
    <variation>S</variation>
    <location>
        <position position="333"/>
    </location>
</feature>
<feature type="sequence conflict" description="In Ref. 2; BAA13926." evidence="5" ref="2">
    <original>T</original>
    <variation>P</variation>
    <location>
        <position position="339"/>
    </location>
</feature>
<feature type="sequence conflict" description="In Ref. 2; BAA13926." evidence="5" ref="2">
    <original>K</original>
    <variation>I</variation>
    <location>
        <position position="344"/>
    </location>
</feature>
<organism>
    <name type="scientific">Schizosaccharomyces pombe (strain 972 / ATCC 24843)</name>
    <name type="common">Fission yeast</name>
    <dbReference type="NCBI Taxonomy" id="284812"/>
    <lineage>
        <taxon>Eukaryota</taxon>
        <taxon>Fungi</taxon>
        <taxon>Dikarya</taxon>
        <taxon>Ascomycota</taxon>
        <taxon>Taphrinomycotina</taxon>
        <taxon>Schizosaccharomycetes</taxon>
        <taxon>Schizosaccharomycetales</taxon>
        <taxon>Schizosaccharomycetaceae</taxon>
        <taxon>Schizosaccharomyces</taxon>
    </lineage>
</organism>
<evidence type="ECO:0000250" key="1">
    <source>
        <dbReference type="UniProtKB" id="P14324"/>
    </source>
</evidence>
<evidence type="ECO:0000250" key="2">
    <source>
        <dbReference type="UniProtKB" id="Q12051"/>
    </source>
</evidence>
<evidence type="ECO:0000269" key="3">
    <source>
    </source>
</evidence>
<evidence type="ECO:0000269" key="4">
    <source>
    </source>
</evidence>
<evidence type="ECO:0000305" key="5"/>